<sequence length="263" mass="28517">MTMPLYASPEQILRDRSEYARKGISRGRSVVVLRYADGVLFVAENPSSTLHKVSEIYDRIGFAAVGRYSEFENLRQAGIRFADVRGYQNDPRDVTGRSLANVYAQTLGSIFTEQIKPLEVEICVAEVGHTPEHDTLYRLTYDGSIVEEPQHSVMGGQAETTATALKESYEEGLPLAAALRVAVKALSAGSASTGNGKPELLEAANLEAAVLERDRPRRAFRRLKGTALAALLQDTPPDDADADADAGKKPANDGNLPPNDDKS</sequence>
<dbReference type="EMBL" id="CP001630">
    <property type="protein sequence ID" value="ACU36182.1"/>
    <property type="molecule type" value="Genomic_DNA"/>
</dbReference>
<dbReference type="RefSeq" id="WP_015801071.1">
    <property type="nucleotide sequence ID" value="NC_013093.1"/>
</dbReference>
<dbReference type="SMR" id="C6WID9"/>
<dbReference type="STRING" id="446462.Amir_2242"/>
<dbReference type="KEGG" id="ami:Amir_2242"/>
<dbReference type="eggNOG" id="COG0638">
    <property type="taxonomic scope" value="Bacteria"/>
</dbReference>
<dbReference type="HOGENOM" id="CLU_071031_0_0_11"/>
<dbReference type="OrthoDB" id="9775643at2"/>
<dbReference type="UniPathway" id="UPA00997"/>
<dbReference type="Proteomes" id="UP000002213">
    <property type="component" value="Chromosome"/>
</dbReference>
<dbReference type="GO" id="GO:0005737">
    <property type="term" value="C:cytoplasm"/>
    <property type="evidence" value="ECO:0007669"/>
    <property type="project" value="UniProtKB-SubCell"/>
</dbReference>
<dbReference type="GO" id="GO:0019773">
    <property type="term" value="C:proteasome core complex, alpha-subunit complex"/>
    <property type="evidence" value="ECO:0007669"/>
    <property type="project" value="UniProtKB-UniRule"/>
</dbReference>
<dbReference type="GO" id="GO:0004298">
    <property type="term" value="F:threonine-type endopeptidase activity"/>
    <property type="evidence" value="ECO:0007669"/>
    <property type="project" value="InterPro"/>
</dbReference>
<dbReference type="GO" id="GO:0019941">
    <property type="term" value="P:modification-dependent protein catabolic process"/>
    <property type="evidence" value="ECO:0007669"/>
    <property type="project" value="UniProtKB-UniRule"/>
</dbReference>
<dbReference type="GO" id="GO:0010498">
    <property type="term" value="P:proteasomal protein catabolic process"/>
    <property type="evidence" value="ECO:0007669"/>
    <property type="project" value="UniProtKB-UniRule"/>
</dbReference>
<dbReference type="CDD" id="cd01906">
    <property type="entry name" value="proteasome_protease_HslV"/>
    <property type="match status" value="1"/>
</dbReference>
<dbReference type="Gene3D" id="3.60.20.10">
    <property type="entry name" value="Glutamine Phosphoribosylpyrophosphate, subunit 1, domain 1"/>
    <property type="match status" value="1"/>
</dbReference>
<dbReference type="HAMAP" id="MF_00289_B">
    <property type="entry name" value="Proteasome_A_B"/>
    <property type="match status" value="1"/>
</dbReference>
<dbReference type="InterPro" id="IPR029055">
    <property type="entry name" value="Ntn_hydrolases_N"/>
</dbReference>
<dbReference type="InterPro" id="IPR050115">
    <property type="entry name" value="Proteasome_alpha"/>
</dbReference>
<dbReference type="InterPro" id="IPR023332">
    <property type="entry name" value="Proteasome_alpha-type"/>
</dbReference>
<dbReference type="InterPro" id="IPR022296">
    <property type="entry name" value="Proteasome_asu_bac"/>
</dbReference>
<dbReference type="InterPro" id="IPR001353">
    <property type="entry name" value="Proteasome_sua/b"/>
</dbReference>
<dbReference type="NCBIfam" id="TIGR03691">
    <property type="entry name" value="20S_bact_alpha"/>
    <property type="match status" value="1"/>
</dbReference>
<dbReference type="PANTHER" id="PTHR11599">
    <property type="entry name" value="PROTEASOME SUBUNIT ALPHA/BETA"/>
    <property type="match status" value="1"/>
</dbReference>
<dbReference type="Pfam" id="PF00227">
    <property type="entry name" value="Proteasome"/>
    <property type="match status" value="1"/>
</dbReference>
<dbReference type="SUPFAM" id="SSF56235">
    <property type="entry name" value="N-terminal nucleophile aminohydrolases (Ntn hydrolases)"/>
    <property type="match status" value="1"/>
</dbReference>
<dbReference type="PROSITE" id="PS51475">
    <property type="entry name" value="PROTEASOME_ALPHA_2"/>
    <property type="match status" value="1"/>
</dbReference>
<name>PSA_ACTMD</name>
<evidence type="ECO:0000255" key="1">
    <source>
        <dbReference type="HAMAP-Rule" id="MF_00289"/>
    </source>
</evidence>
<evidence type="ECO:0000256" key="2">
    <source>
        <dbReference type="SAM" id="MobiDB-lite"/>
    </source>
</evidence>
<reference key="1">
    <citation type="journal article" date="2009" name="Stand. Genomic Sci.">
        <title>Complete genome sequence of Actinosynnema mirum type strain (101).</title>
        <authorList>
            <person name="Land M."/>
            <person name="Lapidus A."/>
            <person name="Mayilraj S."/>
            <person name="Chen F."/>
            <person name="Copeland A."/>
            <person name="Del Rio T.G."/>
            <person name="Nolan M."/>
            <person name="Lucas S."/>
            <person name="Tice H."/>
            <person name="Cheng J.F."/>
            <person name="Chertkov O."/>
            <person name="Bruce D."/>
            <person name="Goodwin L."/>
            <person name="Pitluck S."/>
            <person name="Rohde M."/>
            <person name="Goker M."/>
            <person name="Pati A."/>
            <person name="Ivanova N."/>
            <person name="Mavromatis K."/>
            <person name="Chen A."/>
            <person name="Palaniappan K."/>
            <person name="Hauser L."/>
            <person name="Chang Y.J."/>
            <person name="Jeffries C.C."/>
            <person name="Brettin T."/>
            <person name="Detter J.C."/>
            <person name="Han C."/>
            <person name="Chain P."/>
            <person name="Tindall B.J."/>
            <person name="Bristow J."/>
            <person name="Eisen J.A."/>
            <person name="Markowitz V."/>
            <person name="Hugenholtz P."/>
            <person name="Kyrpides N.C."/>
            <person name="Klenk H.P."/>
        </authorList>
    </citation>
    <scope>NUCLEOTIDE SEQUENCE [LARGE SCALE GENOMIC DNA]</scope>
    <source>
        <strain>ATCC 29888 / DSM 43827 / JCM 3225 / NBRC 14064 / NCIMB 13271 / NRRL B-12336 / IMRU 3971 / 101</strain>
    </source>
</reference>
<gene>
    <name evidence="1" type="primary">prcA</name>
    <name type="ordered locus">Amir_2242</name>
</gene>
<organism>
    <name type="scientific">Actinosynnema mirum (strain ATCC 29888 / DSM 43827 / JCM 3225 / NBRC 14064 / NCIMB 13271 / NRRL B-12336 / IMRU 3971 / 101)</name>
    <dbReference type="NCBI Taxonomy" id="446462"/>
    <lineage>
        <taxon>Bacteria</taxon>
        <taxon>Bacillati</taxon>
        <taxon>Actinomycetota</taxon>
        <taxon>Actinomycetes</taxon>
        <taxon>Pseudonocardiales</taxon>
        <taxon>Pseudonocardiaceae</taxon>
        <taxon>Actinosynnema</taxon>
    </lineage>
</organism>
<keyword id="KW-0963">Cytoplasm</keyword>
<keyword id="KW-0647">Proteasome</keyword>
<keyword id="KW-1185">Reference proteome</keyword>
<comment type="function">
    <text evidence="1">Component of the proteasome core, a large protease complex with broad specificity involved in protein degradation.</text>
</comment>
<comment type="activity regulation">
    <text evidence="1">The formation of the proteasomal ATPase ARC-20S proteasome complex, likely via the docking of the C-termini of ARC into the intersubunit pockets in the alpha-rings, may trigger opening of the gate for substrate entry. Interconversion between the open-gate and close-gate conformations leads to a dynamic regulation of the 20S proteasome proteolysis activity.</text>
</comment>
<comment type="pathway">
    <text evidence="1">Protein degradation; proteasomal Pup-dependent pathway.</text>
</comment>
<comment type="subunit">
    <text evidence="1">The 20S proteasome core is composed of 14 alpha and 14 beta subunits that assemble into four stacked heptameric rings, resulting in a barrel-shaped structure. The two inner rings, each composed of seven catalytic beta subunits, are sandwiched by two outer rings, each composed of seven alpha subunits. The catalytic chamber with the active sites is on the inside of the barrel. Has a gated structure, the ends of the cylinder being occluded by the N-termini of the alpha-subunits. Is capped by the proteasome-associated ATPase, ARC.</text>
</comment>
<comment type="subcellular location">
    <subcellularLocation>
        <location evidence="1">Cytoplasm</location>
    </subcellularLocation>
</comment>
<comment type="similarity">
    <text evidence="1">Belongs to the peptidase T1A family.</text>
</comment>
<feature type="chain" id="PRO_0000397132" description="Proteasome subunit alpha">
    <location>
        <begin position="1"/>
        <end position="263"/>
    </location>
</feature>
<feature type="region of interest" description="Disordered" evidence="2">
    <location>
        <begin position="229"/>
        <end position="263"/>
    </location>
</feature>
<protein>
    <recommendedName>
        <fullName evidence="1">Proteasome subunit alpha</fullName>
    </recommendedName>
    <alternativeName>
        <fullName evidence="1">20S proteasome alpha subunit</fullName>
    </alternativeName>
    <alternativeName>
        <fullName evidence="1">Proteasome core protein PrcA</fullName>
    </alternativeName>
</protein>
<proteinExistence type="inferred from homology"/>
<accession>C6WID9</accession>